<dbReference type="EMBL" id="AAFW02000044">
    <property type="protein sequence ID" value="EDN63251.1"/>
    <property type="molecule type" value="Genomic_DNA"/>
</dbReference>
<dbReference type="SMR" id="A6ZQJ9"/>
<dbReference type="HOGENOM" id="CLU_057910_0_0_1"/>
<dbReference type="Proteomes" id="UP000007060">
    <property type="component" value="Unassembled WGS sequence"/>
</dbReference>
<dbReference type="GO" id="GO:0005739">
    <property type="term" value="C:mitochondrion"/>
    <property type="evidence" value="ECO:0007669"/>
    <property type="project" value="UniProtKB-SubCell"/>
</dbReference>
<dbReference type="InterPro" id="IPR029427">
    <property type="entry name" value="AIM23"/>
</dbReference>
<dbReference type="Pfam" id="PF14877">
    <property type="entry name" value="mIF3"/>
    <property type="match status" value="1"/>
</dbReference>
<organism>
    <name type="scientific">Saccharomyces cerevisiae (strain YJM789)</name>
    <name type="common">Baker's yeast</name>
    <dbReference type="NCBI Taxonomy" id="307796"/>
    <lineage>
        <taxon>Eukaryota</taxon>
        <taxon>Fungi</taxon>
        <taxon>Dikarya</taxon>
        <taxon>Ascomycota</taxon>
        <taxon>Saccharomycotina</taxon>
        <taxon>Saccharomycetes</taxon>
        <taxon>Saccharomycetales</taxon>
        <taxon>Saccharomycetaceae</taxon>
        <taxon>Saccharomyces</taxon>
    </lineage>
</organism>
<gene>
    <name type="primary">AIM23</name>
    <name type="ORF">SCY_3160</name>
</gene>
<accession>A6ZQJ9</accession>
<evidence type="ECO:0000250" key="1"/>
<evidence type="ECO:0000255" key="2"/>
<evidence type="ECO:0000305" key="3"/>
<protein>
    <recommendedName>
        <fullName>Altered inheritance of mitochondria protein 23, mitochondrial</fullName>
    </recommendedName>
</protein>
<reference key="1">
    <citation type="journal article" date="2007" name="Proc. Natl. Acad. Sci. U.S.A.">
        <title>Genome sequencing and comparative analysis of Saccharomyces cerevisiae strain YJM789.</title>
        <authorList>
            <person name="Wei W."/>
            <person name="McCusker J.H."/>
            <person name="Hyman R.W."/>
            <person name="Jones T."/>
            <person name="Ning Y."/>
            <person name="Cao Z."/>
            <person name="Gu Z."/>
            <person name="Bruno D."/>
            <person name="Miranda M."/>
            <person name="Nguyen M."/>
            <person name="Wilhelmy J."/>
            <person name="Komp C."/>
            <person name="Tamse R."/>
            <person name="Wang X."/>
            <person name="Jia P."/>
            <person name="Luedi P."/>
            <person name="Oefner P.J."/>
            <person name="David L."/>
            <person name="Dietrich F.S."/>
            <person name="Li Y."/>
            <person name="Davis R.W."/>
            <person name="Steinmetz L.M."/>
        </authorList>
    </citation>
    <scope>NUCLEOTIDE SEQUENCE [LARGE SCALE GENOMIC DNA]</scope>
    <source>
        <strain>YJM789</strain>
    </source>
</reference>
<keyword id="KW-0496">Mitochondrion</keyword>
<keyword id="KW-0809">Transit peptide</keyword>
<sequence>MLKVPLSDVLSQKMLFLKSFRYFHCTKYFSRDNASSTTDIFRNAMKRKRELANLKEQSHGNVARNAAFPKEYIKRPKQVPRNATNRKKILITWSTGTDRAKEAANSVVSEIFKKNHKGNIKVVDPTTHRIEPSNIRYFAKGIDLDKVGLSIVNVEQIDNENQIPLVKIVESRVALKKYSDFLAKKKEKELMELGVLNKSYKNLVTDKKEDNLKHIKISWQIESDDLKRQKAHEIVSLLKKGNKVTLYLDDKNNINSNNWLENFEELDRSQKGEPPRLPESVFQKRAAVLETLKEIVSEYANDPVLLGNMNSKMIMKLIPKDVKPQNNDKRALKELRKKERQEKLQKRIQRKKMNEM</sequence>
<name>AIM23_YEAS7</name>
<proteinExistence type="inferred from homology"/>
<feature type="transit peptide" description="Mitochondrion" evidence="2">
    <location>
        <begin position="1"/>
        <end position="32"/>
    </location>
</feature>
<feature type="chain" id="PRO_0000399546" description="Altered inheritance of mitochondria protein 23, mitochondrial">
    <location>
        <begin position="33"/>
        <end position="356"/>
    </location>
</feature>
<comment type="subcellular location">
    <subcellularLocation>
        <location evidence="1">Mitochondrion</location>
    </subcellularLocation>
</comment>
<comment type="similarity">
    <text evidence="3">Belongs to the AIM23 family.</text>
</comment>